<keyword id="KW-0012">Acyltransferase</keyword>
<keyword id="KW-0028">Amino-acid biosynthesis</keyword>
<keyword id="KW-0963">Cytoplasm</keyword>
<keyword id="KW-0486">Methionine biosynthesis</keyword>
<keyword id="KW-0808">Transferase</keyword>
<dbReference type="EC" id="2.3.1.31" evidence="1"/>
<dbReference type="EMBL" id="CP000088">
    <property type="protein sequence ID" value="AAZ56855.1"/>
    <property type="molecule type" value="Genomic_DNA"/>
</dbReference>
<dbReference type="RefSeq" id="WP_011293245.1">
    <property type="nucleotide sequence ID" value="NC_007333.1"/>
</dbReference>
<dbReference type="SMR" id="Q47L17"/>
<dbReference type="STRING" id="269800.Tfu_2822"/>
<dbReference type="ESTHER" id="thefy-q47l17">
    <property type="family name" value="Homoserine_transacetylase"/>
</dbReference>
<dbReference type="KEGG" id="tfu:Tfu_2822"/>
<dbReference type="eggNOG" id="COG2021">
    <property type="taxonomic scope" value="Bacteria"/>
</dbReference>
<dbReference type="HOGENOM" id="CLU_028760_1_0_11"/>
<dbReference type="OrthoDB" id="9800754at2"/>
<dbReference type="UniPathway" id="UPA00051">
    <property type="reaction ID" value="UER00074"/>
</dbReference>
<dbReference type="GO" id="GO:0005737">
    <property type="term" value="C:cytoplasm"/>
    <property type="evidence" value="ECO:0007669"/>
    <property type="project" value="UniProtKB-SubCell"/>
</dbReference>
<dbReference type="GO" id="GO:0004414">
    <property type="term" value="F:homoserine O-acetyltransferase activity"/>
    <property type="evidence" value="ECO:0007669"/>
    <property type="project" value="UniProtKB-UniRule"/>
</dbReference>
<dbReference type="GO" id="GO:0009092">
    <property type="term" value="P:homoserine metabolic process"/>
    <property type="evidence" value="ECO:0007669"/>
    <property type="project" value="TreeGrafter"/>
</dbReference>
<dbReference type="GO" id="GO:0009086">
    <property type="term" value="P:methionine biosynthetic process"/>
    <property type="evidence" value="ECO:0007669"/>
    <property type="project" value="UniProtKB-UniRule"/>
</dbReference>
<dbReference type="Gene3D" id="3.40.50.1820">
    <property type="entry name" value="alpha/beta hydrolase"/>
    <property type="match status" value="1"/>
</dbReference>
<dbReference type="HAMAP" id="MF_00296">
    <property type="entry name" value="MetX_acyltransf"/>
    <property type="match status" value="1"/>
</dbReference>
<dbReference type="InterPro" id="IPR000073">
    <property type="entry name" value="AB_hydrolase_1"/>
</dbReference>
<dbReference type="InterPro" id="IPR029058">
    <property type="entry name" value="AB_hydrolase_fold"/>
</dbReference>
<dbReference type="InterPro" id="IPR008220">
    <property type="entry name" value="HAT_MetX-like"/>
</dbReference>
<dbReference type="NCBIfam" id="TIGR01392">
    <property type="entry name" value="homoserO_Ac_trn"/>
    <property type="match status" value="1"/>
</dbReference>
<dbReference type="NCBIfam" id="NF001209">
    <property type="entry name" value="PRK00175.1"/>
    <property type="match status" value="1"/>
</dbReference>
<dbReference type="PANTHER" id="PTHR32268">
    <property type="entry name" value="HOMOSERINE O-ACETYLTRANSFERASE"/>
    <property type="match status" value="1"/>
</dbReference>
<dbReference type="PANTHER" id="PTHR32268:SF11">
    <property type="entry name" value="HOMOSERINE O-ACETYLTRANSFERASE"/>
    <property type="match status" value="1"/>
</dbReference>
<dbReference type="Pfam" id="PF00561">
    <property type="entry name" value="Abhydrolase_1"/>
    <property type="match status" value="1"/>
</dbReference>
<dbReference type="PIRSF" id="PIRSF000443">
    <property type="entry name" value="Homoser_Ac_trans"/>
    <property type="match status" value="1"/>
</dbReference>
<dbReference type="SUPFAM" id="SSF53474">
    <property type="entry name" value="alpha/beta-Hydrolases"/>
    <property type="match status" value="1"/>
</dbReference>
<reference key="1">
    <citation type="journal article" date="2007" name="J. Bacteriol.">
        <title>Genome sequence and analysis of the soil cellulolytic actinomycete Thermobifida fusca YX.</title>
        <authorList>
            <person name="Lykidis A."/>
            <person name="Mavromatis K."/>
            <person name="Ivanova N."/>
            <person name="Anderson I."/>
            <person name="Land M."/>
            <person name="DiBartolo G."/>
            <person name="Martinez M."/>
            <person name="Lapidus A."/>
            <person name="Lucas S."/>
            <person name="Copeland A."/>
            <person name="Richardson P."/>
            <person name="Wilson D.B."/>
            <person name="Kyrpides N."/>
        </authorList>
    </citation>
    <scope>NUCLEOTIDE SEQUENCE [LARGE SCALE GENOMIC DNA]</scope>
    <source>
        <strain>YX</strain>
    </source>
</reference>
<accession>Q47L17</accession>
<evidence type="ECO:0000255" key="1">
    <source>
        <dbReference type="HAMAP-Rule" id="MF_00296"/>
    </source>
</evidence>
<evidence type="ECO:0000256" key="2">
    <source>
        <dbReference type="SAM" id="MobiDB-lite"/>
    </source>
</evidence>
<organism>
    <name type="scientific">Thermobifida fusca (strain YX)</name>
    <dbReference type="NCBI Taxonomy" id="269800"/>
    <lineage>
        <taxon>Bacteria</taxon>
        <taxon>Bacillati</taxon>
        <taxon>Actinomycetota</taxon>
        <taxon>Actinomycetes</taxon>
        <taxon>Streptosporangiales</taxon>
        <taxon>Nocardiopsidaceae</taxon>
        <taxon>Thermobifida</taxon>
    </lineage>
</organism>
<protein>
    <recommendedName>
        <fullName evidence="1">Homoserine O-acetyltransferase</fullName>
        <shortName evidence="1">HAT</shortName>
        <ecNumber evidence="1">2.3.1.31</ecNumber>
    </recommendedName>
    <alternativeName>
        <fullName evidence="1">Homoserine transacetylase</fullName>
        <shortName evidence="1">HTA</shortName>
    </alternativeName>
</protein>
<name>METXA_THEFY</name>
<comment type="function">
    <text evidence="1">Transfers an acetyl group from acetyl-CoA to L-homoserine, forming acetyl-L-homoserine.</text>
</comment>
<comment type="catalytic activity">
    <reaction evidence="1">
        <text>L-homoserine + acetyl-CoA = O-acetyl-L-homoserine + CoA</text>
        <dbReference type="Rhea" id="RHEA:13701"/>
        <dbReference type="ChEBI" id="CHEBI:57287"/>
        <dbReference type="ChEBI" id="CHEBI:57288"/>
        <dbReference type="ChEBI" id="CHEBI:57476"/>
        <dbReference type="ChEBI" id="CHEBI:57716"/>
        <dbReference type="EC" id="2.3.1.31"/>
    </reaction>
</comment>
<comment type="pathway">
    <text evidence="1">Amino-acid biosynthesis; L-methionine biosynthesis via de novo pathway; O-acetyl-L-homoserine from L-homoserine: step 1/1.</text>
</comment>
<comment type="subunit">
    <text evidence="1">Homodimer.</text>
</comment>
<comment type="subcellular location">
    <subcellularLocation>
        <location evidence="1">Cytoplasm</location>
    </subcellularLocation>
</comment>
<comment type="similarity">
    <text evidence="1">Belongs to the AB hydrolase superfamily. MetX family.</text>
</comment>
<sequence length="379" mass="40833">MSHDTTPPLPATGAWREGDPPGDRRWVELSEPLPLETGGELPGVRLAYETWGSLNEDRSNAVLVLHALTGDSHVVGPEGPGHPSPGWWEGIIGPGLALDTDRYFVVAPNVLGGCQGSTGPSSTAPDGRPWGSRFPRITIRDTVRAEFALLREFGIHSWAAVLGGSMGGMRALEWAATYPERVRRLLLLASPAASSAQQIAWAAPQLHAIRSDPYWHGGDYYDRPGPGPVTGMGIARRIAHITYRGATEFDERFGRNPQDGEDPMAGGRFAVESYLDHHAVKLARRFDAGSYVVLTQAMNTHDVGRGRGGVAQALRRVTARTMVAGVSSDFLYPLAQQQELADGIPGADEVRVIESASGHDGFLTEINQVSVLIKELLAQ</sequence>
<feature type="chain" id="PRO_0000231887" description="Homoserine O-acetyltransferase">
    <location>
        <begin position="1"/>
        <end position="379"/>
    </location>
</feature>
<feature type="domain" description="AB hydrolase-1" evidence="1">
    <location>
        <begin position="60"/>
        <end position="365"/>
    </location>
</feature>
<feature type="region of interest" description="Disordered" evidence="2">
    <location>
        <begin position="1"/>
        <end position="24"/>
    </location>
</feature>
<feature type="active site" description="Nucleophile" evidence="1">
    <location>
        <position position="165"/>
    </location>
</feature>
<feature type="active site" evidence="1">
    <location>
        <position position="329"/>
    </location>
</feature>
<feature type="active site" evidence="1">
    <location>
        <position position="359"/>
    </location>
</feature>
<feature type="binding site" evidence="1">
    <location>
        <position position="236"/>
    </location>
    <ligand>
        <name>substrate</name>
    </ligand>
</feature>
<feature type="binding site" evidence="1">
    <location>
        <position position="360"/>
    </location>
    <ligand>
        <name>substrate</name>
    </ligand>
</feature>
<gene>
    <name evidence="1" type="primary">metXA</name>
    <name type="ordered locus">Tfu_2822</name>
</gene>
<proteinExistence type="inferred from homology"/>